<reference key="1">
    <citation type="journal article" date="2005" name="Science">
        <title>Mammalian SAD kinases are required for neuronal polarization.</title>
        <authorList>
            <person name="Kishi M."/>
            <person name="Pan Y.A."/>
            <person name="Crump J.G."/>
            <person name="Sanes J.R."/>
        </authorList>
    </citation>
    <scope>NUCLEOTIDE SEQUENCE [MRNA] (ISOFORM 1)</scope>
    <scope>FUNCTION</scope>
    <scope>TISSUE SPECIFICITY</scope>
    <scope>DISRUPTION PHENOTYPE</scope>
</reference>
<reference key="2">
    <citation type="journal article" date="2009" name="Nat. Cell Biol.">
        <title>SADB phosphorylation of gamma-tubulin regulates centrosome duplication.</title>
        <authorList>
            <person name="Alvarado-Kristensson M."/>
            <person name="Rodriguez M.J."/>
            <person name="Silio V."/>
            <person name="Valpuesta J.M."/>
            <person name="Carrera A.C."/>
        </authorList>
    </citation>
    <scope>NUCLEOTIDE SEQUENCE [MRNA] (ISOFORMS 1; 2 AND 4)</scope>
    <scope>FUNCTION</scope>
    <scope>SUBCELLULAR LOCATION</scope>
    <scope>MUTAGENESIS OF LYS-63</scope>
    <scope>DEVELOPMENTAL STAGE</scope>
</reference>
<reference key="3">
    <citation type="journal article" date="2004" name="Genome Res.">
        <title>The status, quality, and expansion of the NIH full-length cDNA project: the Mammalian Gene Collection (MGC).</title>
        <authorList>
            <consortium name="The MGC Project Team"/>
        </authorList>
    </citation>
    <scope>NUCLEOTIDE SEQUENCE [LARGE SCALE MRNA]</scope>
    <source>
        <strain>C57BL/6J</strain>
    </source>
</reference>
<reference key="4">
    <citation type="journal article" date="2007" name="Cell">
        <title>LKB1 and SAD kinases define a pathway required for the polarization of cortical neurons.</title>
        <authorList>
            <person name="Barnes A.P."/>
            <person name="Lilley B.N."/>
            <person name="Pan Y.A."/>
            <person name="Plummer L.J."/>
            <person name="Powell A.W."/>
            <person name="Raines A.N."/>
            <person name="Sanes J.R."/>
            <person name="Polleux F."/>
        </authorList>
    </citation>
    <scope>FUNCTION</scope>
    <scope>ACTIVITY REGULATION</scope>
    <scope>PHOSPHORYLATION AT THR-189</scope>
    <scope>MUTAGENESIS OF THR-189</scope>
</reference>
<reference key="5">
    <citation type="journal article" date="2010" name="Cell">
        <title>A tissue-specific atlas of mouse protein phosphorylation and expression.</title>
        <authorList>
            <person name="Huttlin E.L."/>
            <person name="Jedrychowski M.P."/>
            <person name="Elias J.E."/>
            <person name="Goswami T."/>
            <person name="Rad R."/>
            <person name="Beausoleil S.A."/>
            <person name="Villen J."/>
            <person name="Haas W."/>
            <person name="Sowa M.E."/>
            <person name="Gygi S.P."/>
        </authorList>
    </citation>
    <scope>PHOSPHORYLATION [LARGE SCALE ANALYSIS] AT SER-399; SER-443; SER-447; SER-450; THR-529; THR-535 AND THR-583</scope>
    <scope>IDENTIFICATION BY MASS SPECTROMETRY [LARGE SCALE ANALYSIS]</scope>
    <source>
        <tissue>Brain</tissue>
        <tissue>Testis</tissue>
    </source>
</reference>
<reference key="6">
    <citation type="journal article" date="2010" name="J. Cell Sci.">
        <title>Persistence of the cell-cycle checkpoint kinase Wee1 in SadA- and SadB-deficient neurons disrupts neuronal polarity.</title>
        <authorList>
            <person name="Muller M."/>
            <person name="Lutter D."/>
            <person name="Puschel A.W."/>
        </authorList>
    </citation>
    <scope>FUNCTION</scope>
</reference>
<reference key="7">
    <citation type="journal article" date="2014" name="Mol. Cell. Proteomics">
        <title>Immunoaffinity enrichment and mass spectrometry analysis of protein methylation.</title>
        <authorList>
            <person name="Guo A."/>
            <person name="Gu H."/>
            <person name="Zhou J."/>
            <person name="Mulhern D."/>
            <person name="Wang Y."/>
            <person name="Lee K.A."/>
            <person name="Yang V."/>
            <person name="Aguiar M."/>
            <person name="Kornhauser J."/>
            <person name="Jia X."/>
            <person name="Ren J."/>
            <person name="Beausoleil S.A."/>
            <person name="Silva J.C."/>
            <person name="Vemulapalli V."/>
            <person name="Bedford M.T."/>
            <person name="Comb M.J."/>
        </authorList>
    </citation>
    <scope>METHYLATION [LARGE SCALE ANALYSIS] AT ARG-466; ARG-481; ARG-484; ARG-498; ARG-525 AND ARG-550</scope>
    <scope>IDENTIFICATION BY MASS SPECTROMETRY [LARGE SCALE ANALYSIS]</scope>
    <source>
        <tissue>Brain</tissue>
        <tissue>Embryo</tissue>
    </source>
</reference>
<keyword id="KW-0002">3D-structure</keyword>
<keyword id="KW-0025">Alternative splicing</keyword>
<keyword id="KW-0067">ATP-binding</keyword>
<keyword id="KW-0131">Cell cycle</keyword>
<keyword id="KW-0966">Cell projection</keyword>
<keyword id="KW-0963">Cytoplasm</keyword>
<keyword id="KW-0968">Cytoplasmic vesicle</keyword>
<keyword id="KW-0206">Cytoskeleton</keyword>
<keyword id="KW-0227">DNA damage</keyword>
<keyword id="KW-0418">Kinase</keyword>
<keyword id="KW-0460">Magnesium</keyword>
<keyword id="KW-0479">Metal-binding</keyword>
<keyword id="KW-0488">Methylation</keyword>
<keyword id="KW-0524">Neurogenesis</keyword>
<keyword id="KW-0547">Nucleotide-binding</keyword>
<keyword id="KW-0539">Nucleus</keyword>
<keyword id="KW-0597">Phosphoprotein</keyword>
<keyword id="KW-1185">Reference proteome</keyword>
<keyword id="KW-0723">Serine/threonine-protein kinase</keyword>
<keyword id="KW-0770">Synapse</keyword>
<keyword id="KW-0808">Transferase</keyword>
<sequence>MSSGSKEGGGGSPAYHLPHPHPHPPQHAQYVGPYRLEKTLGKGQTGLVKLGVHCITGQKVAVKIVNREKLSESVLMKVEREIAILKLIEHPHVLKLHDVYENKKYLYLVLEHVSGGELFDYLVKKGRLTPKEARKFFRQIVSALDFCHSYSICHRDLKPENLLLDEKNNIRIADFGMASLQVGDSLLETSCGSPHYACPEVIKGEKYDGRRADMWSCGVILFALLVGALPFDDDNLRQLLEKVKRGVFHMPHFIPPDCQSLLRGMIEVEPEKRLSLEQIQKHPWYLGGKHEPDPCLEPAPGRRVAMRSLPSNGELDPDVLESMASLGCFRDRERLHRELRSEEENQEKMIYYLLLDRKERYPSCEDQDLPPRNDVDPPRKRVDSPMLSRHGKRRPERKSMEVLSITDAGSGGSPVPTRRALEMAQHSQRSRSVSGASTGLSSSPLSSPRSPVFSFSPEPGAGDEARGGGSPTSKTQTLPSRGPRGGGAGEQPPPPSARSTPLPGPPGSPRSSGGTPLHSPLHTPRASPTGTPGTTPPPSPGGGVGGAAWRSRLNSIRNSFLGSPRFHRRKMQVPTAEEMSSLTPESSPELAKRSWFGNFISLDKEEQIFLVLKDKPLSSIKADIVHAFLSIPSLSHSVLSQTSFRAEYKASGGPSVFQKPVRFQVDISSSEGPEPSPRRDGSSGGGIYSVTFTLISGPSRRFKRVVETIQAQLLSTHDQPSVQALADEKNGAQTRPAGTPPRSLQPPPGRSDPDLSSSPRRGPPKDKKLLATNGTPLP</sequence>
<evidence type="ECO:0000250" key="1"/>
<evidence type="ECO:0000250" key="2">
    <source>
        <dbReference type="UniProtKB" id="B2DD29"/>
    </source>
</evidence>
<evidence type="ECO:0000250" key="3">
    <source>
        <dbReference type="UniProtKB" id="Q8TDC3"/>
    </source>
</evidence>
<evidence type="ECO:0000255" key="4">
    <source>
        <dbReference type="PROSITE-ProRule" id="PRU00159"/>
    </source>
</evidence>
<evidence type="ECO:0000255" key="5">
    <source>
        <dbReference type="PROSITE-ProRule" id="PRU00212"/>
    </source>
</evidence>
<evidence type="ECO:0000255" key="6">
    <source>
        <dbReference type="PROSITE-ProRule" id="PRU10027"/>
    </source>
</evidence>
<evidence type="ECO:0000256" key="7">
    <source>
        <dbReference type="SAM" id="MobiDB-lite"/>
    </source>
</evidence>
<evidence type="ECO:0000269" key="8">
    <source>
    </source>
</evidence>
<evidence type="ECO:0000269" key="9">
    <source>
    </source>
</evidence>
<evidence type="ECO:0000269" key="10">
    <source>
    </source>
</evidence>
<evidence type="ECO:0000269" key="11">
    <source>
    </source>
</evidence>
<evidence type="ECO:0000303" key="12">
    <source>
    </source>
</evidence>
<evidence type="ECO:0000305" key="13"/>
<evidence type="ECO:0007744" key="14">
    <source>
    </source>
</evidence>
<evidence type="ECO:0007744" key="15">
    <source>
    </source>
</evidence>
<evidence type="ECO:0007829" key="16">
    <source>
        <dbReference type="PDB" id="5IRI"/>
    </source>
</evidence>
<feature type="chain" id="PRO_0000260829" description="Serine/threonine-protein kinase BRSK1">
    <location>
        <begin position="1"/>
        <end position="778"/>
    </location>
</feature>
<feature type="domain" description="Protein kinase" evidence="4">
    <location>
        <begin position="34"/>
        <end position="285"/>
    </location>
</feature>
<feature type="domain" description="UBA" evidence="5">
    <location>
        <begin position="314"/>
        <end position="356"/>
    </location>
</feature>
<feature type="region of interest" description="Disordered" evidence="7">
    <location>
        <begin position="1"/>
        <end position="29"/>
    </location>
</feature>
<feature type="region of interest" description="Disordered" evidence="7">
    <location>
        <begin position="362"/>
        <end position="548"/>
    </location>
</feature>
<feature type="region of interest" description="Disordered" evidence="7">
    <location>
        <begin position="560"/>
        <end position="588"/>
    </location>
</feature>
<feature type="region of interest" description="Disordered" evidence="7">
    <location>
        <begin position="719"/>
        <end position="778"/>
    </location>
</feature>
<feature type="compositionally biased region" description="Gly residues" evidence="7">
    <location>
        <begin position="1"/>
        <end position="12"/>
    </location>
</feature>
<feature type="compositionally biased region" description="Basic and acidic residues" evidence="7">
    <location>
        <begin position="362"/>
        <end position="383"/>
    </location>
</feature>
<feature type="compositionally biased region" description="Low complexity" evidence="7">
    <location>
        <begin position="430"/>
        <end position="457"/>
    </location>
</feature>
<feature type="compositionally biased region" description="Pro residues" evidence="7">
    <location>
        <begin position="491"/>
        <end position="508"/>
    </location>
</feature>
<feature type="compositionally biased region" description="Low complexity" evidence="7">
    <location>
        <begin position="509"/>
        <end position="533"/>
    </location>
</feature>
<feature type="active site" description="Proton acceptor" evidence="4 6">
    <location>
        <position position="156"/>
    </location>
</feature>
<feature type="binding site" evidence="4">
    <location>
        <begin position="40"/>
        <end position="48"/>
    </location>
    <ligand>
        <name>ATP</name>
        <dbReference type="ChEBI" id="CHEBI:30616"/>
    </ligand>
</feature>
<feature type="binding site" evidence="13">
    <location>
        <position position="63"/>
    </location>
    <ligand>
        <name>ATP</name>
        <dbReference type="ChEBI" id="CHEBI:30616"/>
    </ligand>
</feature>
<feature type="modified residue" description="Phosphothreonine; by LKB1" evidence="9">
    <location>
        <position position="189"/>
    </location>
</feature>
<feature type="modified residue" description="Phosphoserine" evidence="14">
    <location>
        <position position="399"/>
    </location>
</feature>
<feature type="modified residue" description="Phosphoserine" evidence="14">
    <location>
        <position position="443"/>
    </location>
</feature>
<feature type="modified residue" description="Phosphoserine" evidence="14">
    <location>
        <position position="447"/>
    </location>
</feature>
<feature type="modified residue" description="Phosphoserine" evidence="14">
    <location>
        <position position="450"/>
    </location>
</feature>
<feature type="modified residue" description="Omega-N-methylarginine" evidence="15">
    <location>
        <position position="466"/>
    </location>
</feature>
<feature type="modified residue" description="Omega-N-methylarginine" evidence="15">
    <location>
        <position position="481"/>
    </location>
</feature>
<feature type="modified residue" description="Omega-N-methylarginine" evidence="15">
    <location>
        <position position="484"/>
    </location>
</feature>
<feature type="modified residue" description="Omega-N-methylarginine" evidence="15">
    <location>
        <position position="498"/>
    </location>
</feature>
<feature type="modified residue" description="Phosphoserine" evidence="3">
    <location>
        <position position="508"/>
    </location>
</feature>
<feature type="modified residue" description="Omega-N-methylarginine" evidence="15">
    <location>
        <position position="525"/>
    </location>
</feature>
<feature type="modified residue" description="Phosphothreonine" evidence="14">
    <location>
        <position position="529"/>
    </location>
</feature>
<feature type="modified residue" description="Phosphothreonine" evidence="14">
    <location>
        <position position="535"/>
    </location>
</feature>
<feature type="modified residue" description="Omega-N-methylarginine" evidence="15">
    <location>
        <position position="550"/>
    </location>
</feature>
<feature type="modified residue" description="Phosphothreonine" evidence="14">
    <location>
        <position position="583"/>
    </location>
</feature>
<feature type="modified residue" description="Phosphoserine" evidence="2">
    <location>
        <position position="586"/>
    </location>
</feature>
<feature type="modified residue" description="Phosphoserine" evidence="2">
    <location>
        <position position="587"/>
    </location>
</feature>
<feature type="modified residue" description="Phosphoserine" evidence="2">
    <location>
        <position position="601"/>
    </location>
</feature>
<feature type="splice variant" id="VSP_041743" description="In isoform 4." evidence="12">
    <original>MSSGSKEGGGGSPAYHLPHPHPHPPQHAQYVGPYRLEKTLGKGQT</original>
    <variation>MQKFGIEEM</variation>
    <location>
        <begin position="1"/>
        <end position="45"/>
    </location>
</feature>
<feature type="splice variant" id="VSP_041745" description="In isoform 2 and isoform 4." evidence="12">
    <location>
        <begin position="344"/>
        <end position="778"/>
    </location>
</feature>
<feature type="mutagenesis site" description="Abolishes kinase activity and ability to regulate centrosome duplication." evidence="10">
    <original>K</original>
    <variation>R</variation>
    <location>
        <position position="63"/>
    </location>
</feature>
<feature type="mutagenesis site" description="Abolishes activation by STK11/LKB1." evidence="9">
    <original>T</original>
    <variation>A</variation>
    <location>
        <position position="189"/>
    </location>
</feature>
<feature type="sequence conflict" description="In Ref. 2; ABS57359/ABS57360." evidence="13" ref="2">
    <location>
        <begin position="18"/>
        <end position="19"/>
    </location>
</feature>
<feature type="sequence conflict" description="In Ref. 1; AAT08446." evidence="13" ref="1">
    <location>
        <begin position="23"/>
        <end position="24"/>
    </location>
</feature>
<feature type="strand" evidence="16">
    <location>
        <begin position="598"/>
        <end position="602"/>
    </location>
</feature>
<feature type="strand" evidence="16">
    <location>
        <begin position="605"/>
        <end position="614"/>
    </location>
</feature>
<feature type="helix" evidence="16">
    <location>
        <begin position="617"/>
        <end position="630"/>
    </location>
</feature>
<feature type="strand" evidence="16">
    <location>
        <begin position="634"/>
        <end position="640"/>
    </location>
</feature>
<feature type="strand" evidence="16">
    <location>
        <begin position="643"/>
        <end position="648"/>
    </location>
</feature>
<feature type="helix" evidence="16">
    <location>
        <begin position="649"/>
        <end position="651"/>
    </location>
</feature>
<feature type="strand" evidence="16">
    <location>
        <begin position="654"/>
        <end position="658"/>
    </location>
</feature>
<feature type="strand" evidence="16">
    <location>
        <begin position="661"/>
        <end position="669"/>
    </location>
</feature>
<feature type="strand" evidence="16">
    <location>
        <begin position="688"/>
        <end position="697"/>
    </location>
</feature>
<feature type="helix" evidence="16">
    <location>
        <begin position="699"/>
        <end position="714"/>
    </location>
</feature>
<comment type="function">
    <text evidence="8 9 10 11">Serine/threonine-protein kinase that plays a key role in polarization of neurons and centrosome duplication. Phosphorylates CDC25B, CDC25C, MAPT/TAU, RIMS1, TUBG1, TUBG2 and WEE1. Following phosphorylation and activation by STK11/LKB1, acts as a key regulator of polarization of cortical neurons, probably by mediating phosphorylation of microtubule-associated proteins such as MAPT/TAU at 'Thr-504' and 'Ser-554'. Also regulates neuron polarization by mediating phosphorylation of WEE1 at 'Ser-642' in postmitotic neurons, leading to down-regulate WEE1 activity in polarized neurons. In neurons, localizes to synaptic vesicles and plays a role in neurotransmitter release, possibly by phosphorylating RIMS1. Also acts as a positive regulator of centrosome duplication by mediating phosphorylation of gamma-tubulin (TUBG1 and TUBG2) at 'Ser-131', leading to translocation of gamma-tubulin and its associated proteins to the centrosome. Involved in the UV-induced DNA damage checkpoint response, probably by inhibiting CDK1 activity through phosphorylation and activation of WEE1, and inhibition of CDC25B and CDC25C.</text>
</comment>
<comment type="catalytic activity">
    <reaction>
        <text>L-seryl-[protein] + ATP = O-phospho-L-seryl-[protein] + ADP + H(+)</text>
        <dbReference type="Rhea" id="RHEA:17989"/>
        <dbReference type="Rhea" id="RHEA-COMP:9863"/>
        <dbReference type="Rhea" id="RHEA-COMP:11604"/>
        <dbReference type="ChEBI" id="CHEBI:15378"/>
        <dbReference type="ChEBI" id="CHEBI:29999"/>
        <dbReference type="ChEBI" id="CHEBI:30616"/>
        <dbReference type="ChEBI" id="CHEBI:83421"/>
        <dbReference type="ChEBI" id="CHEBI:456216"/>
        <dbReference type="EC" id="2.7.11.1"/>
    </reaction>
</comment>
<comment type="catalytic activity">
    <reaction>
        <text>L-threonyl-[protein] + ATP = O-phospho-L-threonyl-[protein] + ADP + H(+)</text>
        <dbReference type="Rhea" id="RHEA:46608"/>
        <dbReference type="Rhea" id="RHEA-COMP:11060"/>
        <dbReference type="Rhea" id="RHEA-COMP:11605"/>
        <dbReference type="ChEBI" id="CHEBI:15378"/>
        <dbReference type="ChEBI" id="CHEBI:30013"/>
        <dbReference type="ChEBI" id="CHEBI:30616"/>
        <dbReference type="ChEBI" id="CHEBI:61977"/>
        <dbReference type="ChEBI" id="CHEBI:456216"/>
        <dbReference type="EC" id="2.7.11.1"/>
    </reaction>
</comment>
<comment type="catalytic activity">
    <reaction>
        <text>L-seryl-[tau protein] + ATP = O-phospho-L-seryl-[tau protein] + ADP + H(+)</text>
        <dbReference type="Rhea" id="RHEA:12801"/>
        <dbReference type="Rhea" id="RHEA-COMP:13701"/>
        <dbReference type="Rhea" id="RHEA-COMP:13702"/>
        <dbReference type="ChEBI" id="CHEBI:15378"/>
        <dbReference type="ChEBI" id="CHEBI:29999"/>
        <dbReference type="ChEBI" id="CHEBI:30616"/>
        <dbReference type="ChEBI" id="CHEBI:83421"/>
        <dbReference type="ChEBI" id="CHEBI:456216"/>
        <dbReference type="EC" id="2.7.11.26"/>
    </reaction>
</comment>
<comment type="catalytic activity">
    <reaction>
        <text>L-threonyl-[tau protein] + ATP = O-phospho-L-threonyl-[tau protein] + ADP + H(+)</text>
        <dbReference type="Rhea" id="RHEA:53904"/>
        <dbReference type="Rhea" id="RHEA-COMP:13703"/>
        <dbReference type="Rhea" id="RHEA-COMP:13704"/>
        <dbReference type="ChEBI" id="CHEBI:15378"/>
        <dbReference type="ChEBI" id="CHEBI:30013"/>
        <dbReference type="ChEBI" id="CHEBI:30616"/>
        <dbReference type="ChEBI" id="CHEBI:61977"/>
        <dbReference type="ChEBI" id="CHEBI:456216"/>
        <dbReference type="EC" id="2.7.11.26"/>
    </reaction>
</comment>
<comment type="cofactor">
    <cofactor evidence="1">
        <name>Mg(2+)</name>
        <dbReference type="ChEBI" id="CHEBI:18420"/>
    </cofactor>
</comment>
<comment type="activity regulation">
    <text evidence="9">Activated by phosphorylation on Thr-189 by STK11/LKB1.</text>
</comment>
<comment type="subcellular location">
    <subcellularLocation>
        <location evidence="1">Cytoplasm</location>
    </subcellularLocation>
    <subcellularLocation>
        <location evidence="1">Nucleus</location>
    </subcellularLocation>
    <subcellularLocation>
        <location evidence="1">Cytoplasm</location>
        <location evidence="1">Cytoskeleton</location>
        <location evidence="1">Microtubule organizing center</location>
        <location evidence="1">Centrosome</location>
    </subcellularLocation>
    <subcellularLocation>
        <location evidence="2">Synapse</location>
    </subcellularLocation>
    <subcellularLocation>
        <location evidence="2">Presynaptic active zone</location>
    </subcellularLocation>
    <subcellularLocation>
        <location evidence="2">Cytoplasmic vesicle</location>
        <location evidence="2">Secretory vesicle</location>
        <location evidence="2">Synaptic vesicle</location>
    </subcellularLocation>
    <text evidence="1">Nuclear in the absence of DNA damage. Translocated to the nucleus in response to UV- or MMS-induced DNA damage (By similarity).</text>
</comment>
<comment type="alternative products">
    <event type="alternative splicing"/>
    <isoform>
        <id>Q5RJI5-1</id>
        <name>1</name>
        <name>SADB-Long</name>
        <name>L</name>
        <sequence type="displayed"/>
    </isoform>
    <isoform>
        <id>Q5RJI5-2</id>
        <name>2</name>
        <name>SADB-short</name>
        <name>S</name>
        <sequence type="described" ref="VSP_041745"/>
    </isoform>
    <isoform>
        <id>Q5RJI5-4</id>
        <name>4</name>
        <name>SADB-short 1</name>
        <name>S1</name>
        <sequence type="described" ref="VSP_041743 VSP_041745"/>
    </isoform>
</comment>
<comment type="tissue specificity">
    <text evidence="8">Present in the gray matter of the brain and spinal cord (at protein level). Expressed in the nervous system, distributed within the brain and spinal cord of embryonic and postnatal animals.</text>
</comment>
<comment type="developmental stage">
    <text evidence="10">Activity is high in G0, decreases after serum addition, and increases transiently in advanced G1, at G1-S, and in S phases.</text>
</comment>
<comment type="PTM">
    <text evidence="9">Phosphorylated at Thr-189 by STK11/LKB1 in complex with STE20-related adapter-alpha (STRADA) pseudo kinase and CAB39. Not phosphorylated at Thr-189 by CaMKK2. In contrast, it is phosphorylated and activated by CaMKK1. May be inactivated via dephosphorylation of Thr-189 by PP2C.</text>
</comment>
<comment type="disruption phenotype">
    <text evidence="8">No visible phenotype. Mice are fertile and healthy. In contrast, mice lacking both Brsk1 and Brsk2 show little spontaneous movement and are only weakly responsive to tactile stimulation: they die within 2 hours of birth. Defects are due to impaired neuronal differentiation and polarity.</text>
</comment>
<comment type="similarity">
    <text evidence="13">Belongs to the protein kinase superfamily. CAMK Ser/Thr protein kinase family. SNF1 subfamily.</text>
</comment>
<gene>
    <name type="primary">Brsk1</name>
    <name type="synonym">Gm1100</name>
    <name type="synonym">Sadb</name>
</gene>
<organism>
    <name type="scientific">Mus musculus</name>
    <name type="common">Mouse</name>
    <dbReference type="NCBI Taxonomy" id="10090"/>
    <lineage>
        <taxon>Eukaryota</taxon>
        <taxon>Metazoa</taxon>
        <taxon>Chordata</taxon>
        <taxon>Craniata</taxon>
        <taxon>Vertebrata</taxon>
        <taxon>Euteleostomi</taxon>
        <taxon>Mammalia</taxon>
        <taxon>Eutheria</taxon>
        <taxon>Euarchontoglires</taxon>
        <taxon>Glires</taxon>
        <taxon>Rodentia</taxon>
        <taxon>Myomorpha</taxon>
        <taxon>Muroidea</taxon>
        <taxon>Muridae</taxon>
        <taxon>Murinae</taxon>
        <taxon>Mus</taxon>
        <taxon>Mus</taxon>
    </lineage>
</organism>
<accession>Q5RJI5</accession>
<accession>A7LH90</accession>
<accession>A7LH91</accession>
<accession>B7SRN7</accession>
<accession>Q699J6</accession>
<dbReference type="EC" id="2.7.11.1"/>
<dbReference type="EC" id="2.7.11.26"/>
<dbReference type="EMBL" id="AY533671">
    <property type="protein sequence ID" value="AAT08446.1"/>
    <property type="molecule type" value="mRNA"/>
</dbReference>
<dbReference type="EMBL" id="EU586326">
    <property type="protein sequence ID" value="ACE82255.1"/>
    <property type="molecule type" value="mRNA"/>
</dbReference>
<dbReference type="EMBL" id="EU016556">
    <property type="protein sequence ID" value="ABS57358.1"/>
    <property type="molecule type" value="mRNA"/>
</dbReference>
<dbReference type="EMBL" id="EU016557">
    <property type="protein sequence ID" value="ABS57359.1"/>
    <property type="molecule type" value="mRNA"/>
</dbReference>
<dbReference type="EMBL" id="EU016558">
    <property type="protein sequence ID" value="ABS57360.1"/>
    <property type="molecule type" value="mRNA"/>
</dbReference>
<dbReference type="EMBL" id="BC086636">
    <property type="protein sequence ID" value="AAH86636.1"/>
    <property type="molecule type" value="mRNA"/>
</dbReference>
<dbReference type="CCDS" id="CCDS20741.1">
    <molecule id="Q5RJI5-1"/>
</dbReference>
<dbReference type="CCDS" id="CCDS85205.1">
    <molecule id="Q5RJI5-2"/>
</dbReference>
<dbReference type="RefSeq" id="NP_001003920.2">
    <molecule id="Q5RJI5-1"/>
    <property type="nucleotide sequence ID" value="NM_001003920.3"/>
</dbReference>
<dbReference type="RefSeq" id="NP_001162044.1">
    <molecule id="Q5RJI5-2"/>
    <property type="nucleotide sequence ID" value="NM_001168572.1"/>
</dbReference>
<dbReference type="PDB" id="5IRI">
    <property type="method" value="X-ray"/>
    <property type="resolution" value="2.80 A"/>
    <property type="chains" value="A/B=592-719"/>
</dbReference>
<dbReference type="PDBsum" id="5IRI"/>
<dbReference type="SMR" id="Q5RJI5"/>
<dbReference type="BioGRID" id="238175">
    <property type="interactions" value="9"/>
</dbReference>
<dbReference type="FunCoup" id="Q5RJI5">
    <property type="interactions" value="1538"/>
</dbReference>
<dbReference type="IntAct" id="Q5RJI5">
    <property type="interactions" value="4"/>
</dbReference>
<dbReference type="STRING" id="10090.ENSMUSP00000039517"/>
<dbReference type="GlyGen" id="Q5RJI5">
    <property type="glycosylation" value="1 site"/>
</dbReference>
<dbReference type="iPTMnet" id="Q5RJI5"/>
<dbReference type="PhosphoSitePlus" id="Q5RJI5"/>
<dbReference type="SwissPalm" id="Q5RJI5"/>
<dbReference type="PaxDb" id="10090-ENSMUSP00000039517"/>
<dbReference type="PeptideAtlas" id="Q5RJI5"/>
<dbReference type="ProteomicsDB" id="265237">
    <molecule id="Q5RJI5-1"/>
</dbReference>
<dbReference type="ProteomicsDB" id="265238">
    <molecule id="Q5RJI5-2"/>
</dbReference>
<dbReference type="ProteomicsDB" id="265239">
    <molecule id="Q5RJI5-4"/>
</dbReference>
<dbReference type="Antibodypedia" id="19545">
    <property type="antibodies" value="448 antibodies from 37 providers"/>
</dbReference>
<dbReference type="DNASU" id="381979"/>
<dbReference type="Ensembl" id="ENSMUST00000048248.9">
    <molecule id="Q5RJI5-1"/>
    <property type="protein sequence ID" value="ENSMUSP00000039517.8"/>
    <property type="gene ID" value="ENSMUSG00000035390.17"/>
</dbReference>
<dbReference type="Ensembl" id="ENSMUST00000205666.2">
    <molecule id="Q5RJI5-4"/>
    <property type="protein sequence ID" value="ENSMUSP00000145845.2"/>
    <property type="gene ID" value="ENSMUSG00000035390.17"/>
</dbReference>
<dbReference type="Ensembl" id="ENSMUST00000206024.2">
    <molecule id="Q5RJI5-2"/>
    <property type="protein sequence ID" value="ENSMUSP00000145970.2"/>
    <property type="gene ID" value="ENSMUSG00000035390.17"/>
</dbReference>
<dbReference type="GeneID" id="381979"/>
<dbReference type="KEGG" id="mmu:381979"/>
<dbReference type="UCSC" id="uc009eye.2">
    <molecule id="Q5RJI5-2"/>
    <property type="organism name" value="mouse"/>
</dbReference>
<dbReference type="UCSC" id="uc009eyf.1">
    <molecule id="Q5RJI5-1"/>
    <property type="organism name" value="mouse"/>
</dbReference>
<dbReference type="AGR" id="MGI:2685946"/>
<dbReference type="CTD" id="84446"/>
<dbReference type="MGI" id="MGI:2685946">
    <property type="gene designation" value="Brsk1"/>
</dbReference>
<dbReference type="VEuPathDB" id="HostDB:ENSMUSG00000035390"/>
<dbReference type="eggNOG" id="KOG0588">
    <property type="taxonomic scope" value="Eukaryota"/>
</dbReference>
<dbReference type="GeneTree" id="ENSGT00940000161254"/>
<dbReference type="InParanoid" id="Q5RJI5"/>
<dbReference type="OMA" id="QHSQRNR"/>
<dbReference type="OrthoDB" id="193931at2759"/>
<dbReference type="PhylomeDB" id="Q5RJI5"/>
<dbReference type="TreeFam" id="TF313967"/>
<dbReference type="BioGRID-ORCS" id="381979">
    <property type="hits" value="0 hits in 79 CRISPR screens"/>
</dbReference>
<dbReference type="CD-CODE" id="CE726F99">
    <property type="entry name" value="Postsynaptic density"/>
</dbReference>
<dbReference type="ChiTaRS" id="Brsk1">
    <property type="organism name" value="mouse"/>
</dbReference>
<dbReference type="EvolutionaryTrace" id="Q5RJI5"/>
<dbReference type="PRO" id="PR:Q5RJI5"/>
<dbReference type="Proteomes" id="UP000000589">
    <property type="component" value="Chromosome 7"/>
</dbReference>
<dbReference type="RNAct" id="Q5RJI5">
    <property type="molecule type" value="protein"/>
</dbReference>
<dbReference type="Bgee" id="ENSMUSG00000035390">
    <property type="expression patterns" value="Expressed in primary visual cortex and 151 other cell types or tissues"/>
</dbReference>
<dbReference type="ExpressionAtlas" id="Q5RJI5">
    <property type="expression patterns" value="baseline and differential"/>
</dbReference>
<dbReference type="GO" id="GO:0005813">
    <property type="term" value="C:centrosome"/>
    <property type="evidence" value="ECO:0000314"/>
    <property type="project" value="UniProtKB"/>
</dbReference>
<dbReference type="GO" id="GO:0098981">
    <property type="term" value="C:cholinergic synapse"/>
    <property type="evidence" value="ECO:0007669"/>
    <property type="project" value="Ensembl"/>
</dbReference>
<dbReference type="GO" id="GO:0005737">
    <property type="term" value="C:cytoplasm"/>
    <property type="evidence" value="ECO:0000250"/>
    <property type="project" value="UniProtKB"/>
</dbReference>
<dbReference type="GO" id="GO:0150034">
    <property type="term" value="C:distal axon"/>
    <property type="evidence" value="ECO:0007669"/>
    <property type="project" value="Ensembl"/>
</dbReference>
<dbReference type="GO" id="GO:0005654">
    <property type="term" value="C:nucleoplasm"/>
    <property type="evidence" value="ECO:0007669"/>
    <property type="project" value="Ensembl"/>
</dbReference>
<dbReference type="GO" id="GO:0005634">
    <property type="term" value="C:nucleus"/>
    <property type="evidence" value="ECO:0000250"/>
    <property type="project" value="UniProtKB"/>
</dbReference>
<dbReference type="GO" id="GO:0014069">
    <property type="term" value="C:postsynaptic density"/>
    <property type="evidence" value="ECO:0007669"/>
    <property type="project" value="Ensembl"/>
</dbReference>
<dbReference type="GO" id="GO:0048786">
    <property type="term" value="C:presynaptic active zone"/>
    <property type="evidence" value="ECO:0007669"/>
    <property type="project" value="UniProtKB-SubCell"/>
</dbReference>
<dbReference type="GO" id="GO:0008021">
    <property type="term" value="C:synaptic vesicle"/>
    <property type="evidence" value="ECO:0000250"/>
    <property type="project" value="UniProtKB"/>
</dbReference>
<dbReference type="GO" id="GO:0005524">
    <property type="term" value="F:ATP binding"/>
    <property type="evidence" value="ECO:0007669"/>
    <property type="project" value="UniProtKB-KW"/>
</dbReference>
<dbReference type="GO" id="GO:0043015">
    <property type="term" value="F:gamma-tubulin binding"/>
    <property type="evidence" value="ECO:0000314"/>
    <property type="project" value="UniProtKB"/>
</dbReference>
<dbReference type="GO" id="GO:0000287">
    <property type="term" value="F:magnesium ion binding"/>
    <property type="evidence" value="ECO:0000250"/>
    <property type="project" value="UniProtKB"/>
</dbReference>
<dbReference type="GO" id="GO:0140678">
    <property type="term" value="F:molecular function inhibitor activity"/>
    <property type="evidence" value="ECO:0000269"/>
    <property type="project" value="DisProt"/>
</dbReference>
<dbReference type="GO" id="GO:0019901">
    <property type="term" value="F:protein kinase binding"/>
    <property type="evidence" value="ECO:0000353"/>
    <property type="project" value="UniProtKB"/>
</dbReference>
<dbReference type="GO" id="GO:0106310">
    <property type="term" value="F:protein serine kinase activity"/>
    <property type="evidence" value="ECO:0007669"/>
    <property type="project" value="RHEA"/>
</dbReference>
<dbReference type="GO" id="GO:0004674">
    <property type="term" value="F:protein serine/threonine kinase activity"/>
    <property type="evidence" value="ECO:0000314"/>
    <property type="project" value="UniProtKB"/>
</dbReference>
<dbReference type="GO" id="GO:0050321">
    <property type="term" value="F:tau-protein kinase activity"/>
    <property type="evidence" value="ECO:0000314"/>
    <property type="project" value="UniProtKB"/>
</dbReference>
<dbReference type="GO" id="GO:0008306">
    <property type="term" value="P:associative learning"/>
    <property type="evidence" value="ECO:0000315"/>
    <property type="project" value="ARUK-UCL"/>
</dbReference>
<dbReference type="GO" id="GO:0007409">
    <property type="term" value="P:axonogenesis"/>
    <property type="evidence" value="ECO:0000315"/>
    <property type="project" value="UniProtKB"/>
</dbReference>
<dbReference type="GO" id="GO:0021953">
    <property type="term" value="P:central nervous system neuron differentiation"/>
    <property type="evidence" value="ECO:0000316"/>
    <property type="project" value="MGI"/>
</dbReference>
<dbReference type="GO" id="GO:0051298">
    <property type="term" value="P:centrosome duplication"/>
    <property type="evidence" value="ECO:0000315"/>
    <property type="project" value="UniProtKB"/>
</dbReference>
<dbReference type="GO" id="GO:0006974">
    <property type="term" value="P:DNA damage response"/>
    <property type="evidence" value="ECO:0000250"/>
    <property type="project" value="UniProtKB"/>
</dbReference>
<dbReference type="GO" id="GO:0030010">
    <property type="term" value="P:establishment of cell polarity"/>
    <property type="evidence" value="ECO:0000315"/>
    <property type="project" value="UniProtKB"/>
</dbReference>
<dbReference type="GO" id="GO:0000086">
    <property type="term" value="P:G2/M transition of mitotic cell cycle"/>
    <property type="evidence" value="ECO:0000266"/>
    <property type="project" value="MGI"/>
</dbReference>
<dbReference type="GO" id="GO:0090176">
    <property type="term" value="P:microtubule cytoskeleton organization involved in establishment of planar polarity"/>
    <property type="evidence" value="ECO:0000316"/>
    <property type="project" value="ARUK-UCL"/>
</dbReference>
<dbReference type="GO" id="GO:0007095">
    <property type="term" value="P:mitotic G2 DNA damage checkpoint signaling"/>
    <property type="evidence" value="ECO:0000250"/>
    <property type="project" value="UniProtKB"/>
</dbReference>
<dbReference type="GO" id="GO:0048812">
    <property type="term" value="P:neuron projection morphogenesis"/>
    <property type="evidence" value="ECO:0000316"/>
    <property type="project" value="MGI"/>
</dbReference>
<dbReference type="GO" id="GO:0007269">
    <property type="term" value="P:neurotransmitter secretion"/>
    <property type="evidence" value="ECO:0000250"/>
    <property type="project" value="UniProtKB"/>
</dbReference>
<dbReference type="GO" id="GO:0006468">
    <property type="term" value="P:protein phosphorylation"/>
    <property type="evidence" value="ECO:0000250"/>
    <property type="project" value="UniProtKB"/>
</dbReference>
<dbReference type="GO" id="GO:0050770">
    <property type="term" value="P:regulation of axonogenesis"/>
    <property type="evidence" value="ECO:0000316"/>
    <property type="project" value="ARUK-UCL"/>
</dbReference>
<dbReference type="GO" id="GO:0010975">
    <property type="term" value="P:regulation of neuron projection development"/>
    <property type="evidence" value="ECO:0000316"/>
    <property type="project" value="ARUK-UCL"/>
</dbReference>
<dbReference type="GO" id="GO:0048167">
    <property type="term" value="P:regulation of synaptic plasticity"/>
    <property type="evidence" value="ECO:0000315"/>
    <property type="project" value="ARUK-UCL"/>
</dbReference>
<dbReference type="GO" id="GO:0010807">
    <property type="term" value="P:regulation of synaptic vesicle priming"/>
    <property type="evidence" value="ECO:0007669"/>
    <property type="project" value="Ensembl"/>
</dbReference>
<dbReference type="GO" id="GO:0009411">
    <property type="term" value="P:response to UV"/>
    <property type="evidence" value="ECO:0000250"/>
    <property type="project" value="UniProtKB"/>
</dbReference>
<dbReference type="GO" id="GO:0099504">
    <property type="term" value="P:synaptic vesicle cycle"/>
    <property type="evidence" value="ECO:0000315"/>
    <property type="project" value="ARUK-UCL"/>
</dbReference>
<dbReference type="CDD" id="cd14081">
    <property type="entry name" value="STKc_BRSK1_2"/>
    <property type="match status" value="1"/>
</dbReference>
<dbReference type="CDD" id="cd14340">
    <property type="entry name" value="UBA_BRSK"/>
    <property type="match status" value="1"/>
</dbReference>
<dbReference type="DisProt" id="DP02423"/>
<dbReference type="FunFam" id="1.10.510.10:FF:000064">
    <property type="entry name" value="BR serine/threonine-protein kinase 2"/>
    <property type="match status" value="1"/>
</dbReference>
<dbReference type="FunFam" id="3.30.200.20:FF:000003">
    <property type="entry name" value="Non-specific serine/threonine protein kinase"/>
    <property type="match status" value="1"/>
</dbReference>
<dbReference type="Gene3D" id="1.10.510.10">
    <property type="entry name" value="Transferase(Phosphotransferase) domain 1"/>
    <property type="match status" value="1"/>
</dbReference>
<dbReference type="InterPro" id="IPR048622">
    <property type="entry name" value="BRSK1_2-like_UBA"/>
</dbReference>
<dbReference type="InterPro" id="IPR011009">
    <property type="entry name" value="Kinase-like_dom_sf"/>
</dbReference>
<dbReference type="InterPro" id="IPR000719">
    <property type="entry name" value="Prot_kinase_dom"/>
</dbReference>
<dbReference type="InterPro" id="IPR017441">
    <property type="entry name" value="Protein_kinase_ATP_BS"/>
</dbReference>
<dbReference type="InterPro" id="IPR008271">
    <property type="entry name" value="Ser/Thr_kinase_AS"/>
</dbReference>
<dbReference type="InterPro" id="IPR015940">
    <property type="entry name" value="UBA"/>
</dbReference>
<dbReference type="PANTHER" id="PTHR24346">
    <property type="entry name" value="MAP/MICROTUBULE AFFINITY-REGULATING KINASE"/>
    <property type="match status" value="1"/>
</dbReference>
<dbReference type="PANTHER" id="PTHR24346:SF36">
    <property type="entry name" value="SERINE_THREONINE-PROTEIN KINASE BRSK1 ISOFORM X1-RELATED"/>
    <property type="match status" value="1"/>
</dbReference>
<dbReference type="Pfam" id="PF21122">
    <property type="entry name" value="KA1_BRSK"/>
    <property type="match status" value="1"/>
</dbReference>
<dbReference type="Pfam" id="PF00069">
    <property type="entry name" value="Pkinase"/>
    <property type="match status" value="1"/>
</dbReference>
<dbReference type="Pfam" id="PF21115">
    <property type="entry name" value="UBA_BRSK"/>
    <property type="match status" value="1"/>
</dbReference>
<dbReference type="SMART" id="SM00220">
    <property type="entry name" value="S_TKc"/>
    <property type="match status" value="1"/>
</dbReference>
<dbReference type="SUPFAM" id="SSF56112">
    <property type="entry name" value="Protein kinase-like (PK-like)"/>
    <property type="match status" value="1"/>
</dbReference>
<dbReference type="PROSITE" id="PS00107">
    <property type="entry name" value="PROTEIN_KINASE_ATP"/>
    <property type="match status" value="1"/>
</dbReference>
<dbReference type="PROSITE" id="PS50011">
    <property type="entry name" value="PROTEIN_KINASE_DOM"/>
    <property type="match status" value="1"/>
</dbReference>
<dbReference type="PROSITE" id="PS00108">
    <property type="entry name" value="PROTEIN_KINASE_ST"/>
    <property type="match status" value="1"/>
</dbReference>
<dbReference type="PROSITE" id="PS50030">
    <property type="entry name" value="UBA"/>
    <property type="match status" value="1"/>
</dbReference>
<protein>
    <recommendedName>
        <fullName>Serine/threonine-protein kinase BRSK1</fullName>
        <ecNumber>2.7.11.1</ecNumber>
        <ecNumber>2.7.11.26</ecNumber>
    </recommendedName>
    <alternativeName>
        <fullName>Brain-specific serine/threonine-protein kinase 1</fullName>
        <shortName>BR serine/threonine-protein kinase 1</shortName>
    </alternativeName>
    <alternativeName>
        <fullName>Serine/threonine-protein kinase SAD-B</fullName>
    </alternativeName>
</protein>
<name>BRSK1_MOUSE</name>
<proteinExistence type="evidence at protein level"/>